<sequence>MKIAVLYGGTSAEREVSLSSGKGIMEALKANGHEVIGIDFHPDQVRDLVDLDVDLVFIGLHGRLGEDGKVQALLDLLNIPYVGTGVQGSALAMDKAKAKLFFEKAGIRVAEEVVLHSFTYDANAFNFTGTYPVVVKPNQEGSTIGLTVAETEEELLQGIEEAFRHDDTILIEEFIAGTEVTVAVLGNKGEERSLPVVEIVPKNKLYDYESKYAPGMSEHIVPARISEEHTAYVQQAAVRAHQALGCDVYSRVDFIVPNDGSDPVILKVNTLPGMTPTSLYPDAAKGVGMSYEEMIQTFVNLSLKK</sequence>
<protein>
    <recommendedName>
        <fullName evidence="1">D-alanine--D-alanine ligase</fullName>
        <ecNumber evidence="1">6.3.2.4</ecNumber>
    </recommendedName>
    <alternativeName>
        <fullName evidence="1">D-Ala-D-Ala ligase</fullName>
    </alternativeName>
    <alternativeName>
        <fullName evidence="1">D-alanylalanine synthetase</fullName>
    </alternativeName>
</protein>
<organism>
    <name type="scientific">Halalkalibacterium halodurans (strain ATCC BAA-125 / DSM 18197 / FERM 7344 / JCM 9153 / C-125)</name>
    <name type="common">Bacillus halodurans</name>
    <dbReference type="NCBI Taxonomy" id="272558"/>
    <lineage>
        <taxon>Bacteria</taxon>
        <taxon>Bacillati</taxon>
        <taxon>Bacillota</taxon>
        <taxon>Bacilli</taxon>
        <taxon>Bacillales</taxon>
        <taxon>Bacillaceae</taxon>
        <taxon>Halalkalibacterium (ex Joshi et al. 2022)</taxon>
    </lineage>
</organism>
<accession>Q9KCF0</accession>
<name>DDL_HALH5</name>
<reference key="1">
    <citation type="journal article" date="2000" name="Nucleic Acids Res.">
        <title>Complete genome sequence of the alkaliphilic bacterium Bacillus halodurans and genomic sequence comparison with Bacillus subtilis.</title>
        <authorList>
            <person name="Takami H."/>
            <person name="Nakasone K."/>
            <person name="Takaki Y."/>
            <person name="Maeno G."/>
            <person name="Sasaki R."/>
            <person name="Masui N."/>
            <person name="Fuji F."/>
            <person name="Hirama C."/>
            <person name="Nakamura Y."/>
            <person name="Ogasawara N."/>
            <person name="Kuhara S."/>
            <person name="Horikoshi K."/>
        </authorList>
    </citation>
    <scope>NUCLEOTIDE SEQUENCE [LARGE SCALE GENOMIC DNA]</scope>
    <source>
        <strain>ATCC BAA-125 / DSM 18197 / FERM 7344 / JCM 9153 / C-125</strain>
    </source>
</reference>
<gene>
    <name evidence="1" type="primary">ddl</name>
    <name type="synonym">ddlA</name>
    <name type="ordered locus">BH1621</name>
</gene>
<evidence type="ECO:0000255" key="1">
    <source>
        <dbReference type="HAMAP-Rule" id="MF_00047"/>
    </source>
</evidence>
<keyword id="KW-0067">ATP-binding</keyword>
<keyword id="KW-0133">Cell shape</keyword>
<keyword id="KW-0961">Cell wall biogenesis/degradation</keyword>
<keyword id="KW-0963">Cytoplasm</keyword>
<keyword id="KW-0436">Ligase</keyword>
<keyword id="KW-0547">Nucleotide-binding</keyword>
<keyword id="KW-0573">Peptidoglycan synthesis</keyword>
<keyword id="KW-1185">Reference proteome</keyword>
<dbReference type="EC" id="6.3.2.4" evidence="1"/>
<dbReference type="EMBL" id="BA000004">
    <property type="protein sequence ID" value="BAB05340.1"/>
    <property type="molecule type" value="Genomic_DNA"/>
</dbReference>
<dbReference type="PIR" id="E83852">
    <property type="entry name" value="E83852"/>
</dbReference>
<dbReference type="RefSeq" id="WP_010897784.1">
    <property type="nucleotide sequence ID" value="NC_002570.2"/>
</dbReference>
<dbReference type="SMR" id="Q9KCF0"/>
<dbReference type="STRING" id="272558.gene:10727519"/>
<dbReference type="KEGG" id="bha:BH1621"/>
<dbReference type="eggNOG" id="COG1181">
    <property type="taxonomic scope" value="Bacteria"/>
</dbReference>
<dbReference type="HOGENOM" id="CLU_039268_1_1_9"/>
<dbReference type="OrthoDB" id="9813261at2"/>
<dbReference type="UniPathway" id="UPA00219"/>
<dbReference type="Proteomes" id="UP000001258">
    <property type="component" value="Chromosome"/>
</dbReference>
<dbReference type="GO" id="GO:0005737">
    <property type="term" value="C:cytoplasm"/>
    <property type="evidence" value="ECO:0007669"/>
    <property type="project" value="UniProtKB-SubCell"/>
</dbReference>
<dbReference type="GO" id="GO:0005524">
    <property type="term" value="F:ATP binding"/>
    <property type="evidence" value="ECO:0007669"/>
    <property type="project" value="UniProtKB-KW"/>
</dbReference>
<dbReference type="GO" id="GO:0008716">
    <property type="term" value="F:D-alanine-D-alanine ligase activity"/>
    <property type="evidence" value="ECO:0007669"/>
    <property type="project" value="UniProtKB-UniRule"/>
</dbReference>
<dbReference type="GO" id="GO:0046872">
    <property type="term" value="F:metal ion binding"/>
    <property type="evidence" value="ECO:0007669"/>
    <property type="project" value="InterPro"/>
</dbReference>
<dbReference type="GO" id="GO:0071555">
    <property type="term" value="P:cell wall organization"/>
    <property type="evidence" value="ECO:0007669"/>
    <property type="project" value="UniProtKB-KW"/>
</dbReference>
<dbReference type="GO" id="GO:0009252">
    <property type="term" value="P:peptidoglycan biosynthetic process"/>
    <property type="evidence" value="ECO:0007669"/>
    <property type="project" value="UniProtKB-UniRule"/>
</dbReference>
<dbReference type="GO" id="GO:0008360">
    <property type="term" value="P:regulation of cell shape"/>
    <property type="evidence" value="ECO:0007669"/>
    <property type="project" value="UniProtKB-KW"/>
</dbReference>
<dbReference type="Gene3D" id="3.40.50.20">
    <property type="match status" value="1"/>
</dbReference>
<dbReference type="Gene3D" id="3.30.1490.20">
    <property type="entry name" value="ATP-grasp fold, A domain"/>
    <property type="match status" value="1"/>
</dbReference>
<dbReference type="Gene3D" id="3.30.470.20">
    <property type="entry name" value="ATP-grasp fold, B domain"/>
    <property type="match status" value="1"/>
</dbReference>
<dbReference type="HAMAP" id="MF_00047">
    <property type="entry name" value="Dala_Dala_lig"/>
    <property type="match status" value="1"/>
</dbReference>
<dbReference type="InterPro" id="IPR011761">
    <property type="entry name" value="ATP-grasp"/>
</dbReference>
<dbReference type="InterPro" id="IPR013815">
    <property type="entry name" value="ATP_grasp_subdomain_1"/>
</dbReference>
<dbReference type="InterPro" id="IPR000291">
    <property type="entry name" value="D-Ala_lig_Van_CS"/>
</dbReference>
<dbReference type="InterPro" id="IPR005905">
    <property type="entry name" value="D_ala_D_ala"/>
</dbReference>
<dbReference type="InterPro" id="IPR011095">
    <property type="entry name" value="Dala_Dala_lig_C"/>
</dbReference>
<dbReference type="InterPro" id="IPR011127">
    <property type="entry name" value="Dala_Dala_lig_N"/>
</dbReference>
<dbReference type="InterPro" id="IPR016185">
    <property type="entry name" value="PreATP-grasp_dom_sf"/>
</dbReference>
<dbReference type="NCBIfam" id="TIGR01205">
    <property type="entry name" value="D_ala_D_alaTIGR"/>
    <property type="match status" value="1"/>
</dbReference>
<dbReference type="NCBIfam" id="NF002378">
    <property type="entry name" value="PRK01372.1"/>
    <property type="match status" value="1"/>
</dbReference>
<dbReference type="PANTHER" id="PTHR23132">
    <property type="entry name" value="D-ALANINE--D-ALANINE LIGASE"/>
    <property type="match status" value="1"/>
</dbReference>
<dbReference type="PANTHER" id="PTHR23132:SF23">
    <property type="entry name" value="D-ALANINE--D-ALANINE LIGASE B"/>
    <property type="match status" value="1"/>
</dbReference>
<dbReference type="Pfam" id="PF07478">
    <property type="entry name" value="Dala_Dala_lig_C"/>
    <property type="match status" value="1"/>
</dbReference>
<dbReference type="Pfam" id="PF01820">
    <property type="entry name" value="Dala_Dala_lig_N"/>
    <property type="match status" value="2"/>
</dbReference>
<dbReference type="PIRSF" id="PIRSF039102">
    <property type="entry name" value="Ddl/VanB"/>
    <property type="match status" value="1"/>
</dbReference>
<dbReference type="SUPFAM" id="SSF56059">
    <property type="entry name" value="Glutathione synthetase ATP-binding domain-like"/>
    <property type="match status" value="1"/>
</dbReference>
<dbReference type="SUPFAM" id="SSF52440">
    <property type="entry name" value="PreATP-grasp domain"/>
    <property type="match status" value="1"/>
</dbReference>
<dbReference type="PROSITE" id="PS50975">
    <property type="entry name" value="ATP_GRASP"/>
    <property type="match status" value="1"/>
</dbReference>
<dbReference type="PROSITE" id="PS00843">
    <property type="entry name" value="DALA_DALA_LIGASE_1"/>
    <property type="match status" value="1"/>
</dbReference>
<dbReference type="PROSITE" id="PS00844">
    <property type="entry name" value="DALA_DALA_LIGASE_2"/>
    <property type="match status" value="1"/>
</dbReference>
<feature type="chain" id="PRO_0000177784" description="D-alanine--D-alanine ligase">
    <location>
        <begin position="1"/>
        <end position="305"/>
    </location>
</feature>
<feature type="domain" description="ATP-grasp" evidence="1">
    <location>
        <begin position="99"/>
        <end position="300"/>
    </location>
</feature>
<feature type="binding site" evidence="1">
    <location>
        <begin position="126"/>
        <end position="181"/>
    </location>
    <ligand>
        <name>ATP</name>
        <dbReference type="ChEBI" id="CHEBI:30616"/>
    </ligand>
</feature>
<proteinExistence type="inferred from homology"/>
<comment type="function">
    <text evidence="1">Cell wall formation.</text>
</comment>
<comment type="catalytic activity">
    <reaction evidence="1">
        <text>2 D-alanine + ATP = D-alanyl-D-alanine + ADP + phosphate + H(+)</text>
        <dbReference type="Rhea" id="RHEA:11224"/>
        <dbReference type="ChEBI" id="CHEBI:15378"/>
        <dbReference type="ChEBI" id="CHEBI:30616"/>
        <dbReference type="ChEBI" id="CHEBI:43474"/>
        <dbReference type="ChEBI" id="CHEBI:57416"/>
        <dbReference type="ChEBI" id="CHEBI:57822"/>
        <dbReference type="ChEBI" id="CHEBI:456216"/>
        <dbReference type="EC" id="6.3.2.4"/>
    </reaction>
</comment>
<comment type="pathway">
    <text evidence="1">Cell wall biogenesis; peptidoglycan biosynthesis.</text>
</comment>
<comment type="subcellular location">
    <subcellularLocation>
        <location evidence="1">Cytoplasm</location>
    </subcellularLocation>
</comment>
<comment type="similarity">
    <text evidence="1">Belongs to the D-alanine--D-alanine ligase family.</text>
</comment>